<name>RS2_STRT1</name>
<sequence>MAVISMKQLLEAGVHFGHQTRRWNPKMAKYIFTERNGIHVIDLQQTVKMVDTAYEFVREAAANDAVILFVGTKKQAAEAVAEEATRAGQYYINHRWLGGTLTNWNTIKKRIARLKEIKQMEADGTFEVLPKKEVALLNKQRARLEKFLGGIEDMPRIPDVIYIVDPHKEQIAVKEAKKLGIPVVAMVDTNADPDEIDVIIPANDDAIRAVKLITSKMADAIIEGNQGEDASADFQEAAAADSIEEIVEVVEGDNN</sequence>
<dbReference type="EMBL" id="CP000024">
    <property type="protein sequence ID" value="AAV61689.1"/>
    <property type="molecule type" value="Genomic_DNA"/>
</dbReference>
<dbReference type="RefSeq" id="WP_002944541.1">
    <property type="nucleotide sequence ID" value="NC_006449.1"/>
</dbReference>
<dbReference type="SMR" id="Q5M1X5"/>
<dbReference type="GeneID" id="66898004"/>
<dbReference type="KEGG" id="stc:str0073"/>
<dbReference type="HOGENOM" id="CLU_040318_1_2_9"/>
<dbReference type="GO" id="GO:0022627">
    <property type="term" value="C:cytosolic small ribosomal subunit"/>
    <property type="evidence" value="ECO:0007669"/>
    <property type="project" value="TreeGrafter"/>
</dbReference>
<dbReference type="GO" id="GO:0003735">
    <property type="term" value="F:structural constituent of ribosome"/>
    <property type="evidence" value="ECO:0007669"/>
    <property type="project" value="InterPro"/>
</dbReference>
<dbReference type="GO" id="GO:0006412">
    <property type="term" value="P:translation"/>
    <property type="evidence" value="ECO:0007669"/>
    <property type="project" value="UniProtKB-UniRule"/>
</dbReference>
<dbReference type="CDD" id="cd01425">
    <property type="entry name" value="RPS2"/>
    <property type="match status" value="1"/>
</dbReference>
<dbReference type="FunFam" id="1.10.287.610:FF:000001">
    <property type="entry name" value="30S ribosomal protein S2"/>
    <property type="match status" value="1"/>
</dbReference>
<dbReference type="Gene3D" id="3.40.50.10490">
    <property type="entry name" value="Glucose-6-phosphate isomerase like protein, domain 1"/>
    <property type="match status" value="1"/>
</dbReference>
<dbReference type="Gene3D" id="1.10.287.610">
    <property type="entry name" value="Helix hairpin bin"/>
    <property type="match status" value="1"/>
</dbReference>
<dbReference type="HAMAP" id="MF_00291_B">
    <property type="entry name" value="Ribosomal_uS2_B"/>
    <property type="match status" value="1"/>
</dbReference>
<dbReference type="InterPro" id="IPR001865">
    <property type="entry name" value="Ribosomal_uS2"/>
</dbReference>
<dbReference type="InterPro" id="IPR005706">
    <property type="entry name" value="Ribosomal_uS2_bac/mit/plastid"/>
</dbReference>
<dbReference type="InterPro" id="IPR018130">
    <property type="entry name" value="Ribosomal_uS2_CS"/>
</dbReference>
<dbReference type="InterPro" id="IPR023591">
    <property type="entry name" value="Ribosomal_uS2_flav_dom_sf"/>
</dbReference>
<dbReference type="NCBIfam" id="TIGR01011">
    <property type="entry name" value="rpsB_bact"/>
    <property type="match status" value="1"/>
</dbReference>
<dbReference type="PANTHER" id="PTHR12534">
    <property type="entry name" value="30S RIBOSOMAL PROTEIN S2 PROKARYOTIC AND ORGANELLAR"/>
    <property type="match status" value="1"/>
</dbReference>
<dbReference type="PANTHER" id="PTHR12534:SF0">
    <property type="entry name" value="SMALL RIBOSOMAL SUBUNIT PROTEIN US2M"/>
    <property type="match status" value="1"/>
</dbReference>
<dbReference type="Pfam" id="PF00318">
    <property type="entry name" value="Ribosomal_S2"/>
    <property type="match status" value="1"/>
</dbReference>
<dbReference type="PRINTS" id="PR00395">
    <property type="entry name" value="RIBOSOMALS2"/>
</dbReference>
<dbReference type="SUPFAM" id="SSF52313">
    <property type="entry name" value="Ribosomal protein S2"/>
    <property type="match status" value="1"/>
</dbReference>
<dbReference type="PROSITE" id="PS00962">
    <property type="entry name" value="RIBOSOMAL_S2_1"/>
    <property type="match status" value="1"/>
</dbReference>
<organism>
    <name type="scientific">Streptococcus thermophilus (strain CNRZ 1066)</name>
    <dbReference type="NCBI Taxonomy" id="299768"/>
    <lineage>
        <taxon>Bacteria</taxon>
        <taxon>Bacillati</taxon>
        <taxon>Bacillota</taxon>
        <taxon>Bacilli</taxon>
        <taxon>Lactobacillales</taxon>
        <taxon>Streptococcaceae</taxon>
        <taxon>Streptococcus</taxon>
    </lineage>
</organism>
<evidence type="ECO:0000255" key="1">
    <source>
        <dbReference type="HAMAP-Rule" id="MF_00291"/>
    </source>
</evidence>
<evidence type="ECO:0000305" key="2"/>
<proteinExistence type="inferred from homology"/>
<feature type="chain" id="PRO_1000004094" description="Small ribosomal subunit protein uS2">
    <location>
        <begin position="1"/>
        <end position="255"/>
    </location>
</feature>
<reference key="1">
    <citation type="journal article" date="2004" name="Nat. Biotechnol.">
        <title>Complete sequence and comparative genome analysis of the dairy bacterium Streptococcus thermophilus.</title>
        <authorList>
            <person name="Bolotin A."/>
            <person name="Quinquis B."/>
            <person name="Renault P."/>
            <person name="Sorokin A."/>
            <person name="Ehrlich S.D."/>
            <person name="Kulakauskas S."/>
            <person name="Lapidus A."/>
            <person name="Goltsman E."/>
            <person name="Mazur M."/>
            <person name="Pusch G.D."/>
            <person name="Fonstein M."/>
            <person name="Overbeek R."/>
            <person name="Kyprides N."/>
            <person name="Purnelle B."/>
            <person name="Prozzi D."/>
            <person name="Ngui K."/>
            <person name="Masuy D."/>
            <person name="Hancy F."/>
            <person name="Burteau S."/>
            <person name="Boutry M."/>
            <person name="Delcour J."/>
            <person name="Goffeau A."/>
            <person name="Hols P."/>
        </authorList>
    </citation>
    <scope>NUCLEOTIDE SEQUENCE [LARGE SCALE GENOMIC DNA]</scope>
    <source>
        <strain>CNRZ 1066</strain>
    </source>
</reference>
<protein>
    <recommendedName>
        <fullName evidence="1">Small ribosomal subunit protein uS2</fullName>
    </recommendedName>
    <alternativeName>
        <fullName evidence="2">30S ribosomal protein S2</fullName>
    </alternativeName>
</protein>
<comment type="similarity">
    <text evidence="1">Belongs to the universal ribosomal protein uS2 family.</text>
</comment>
<accession>Q5M1X5</accession>
<keyword id="KW-0687">Ribonucleoprotein</keyword>
<keyword id="KW-0689">Ribosomal protein</keyword>
<gene>
    <name evidence="1" type="primary">rpsB</name>
    <name type="ordered locus">str0073</name>
</gene>